<organism>
    <name type="scientific">Staphylococcus aureus (strain COL)</name>
    <dbReference type="NCBI Taxonomy" id="93062"/>
    <lineage>
        <taxon>Bacteria</taxon>
        <taxon>Bacillati</taxon>
        <taxon>Bacillota</taxon>
        <taxon>Bacilli</taxon>
        <taxon>Bacillales</taxon>
        <taxon>Staphylococcaceae</taxon>
        <taxon>Staphylococcus</taxon>
    </lineage>
</organism>
<keyword id="KW-0521">NADP</keyword>
<keyword id="KW-0554">One-carbon metabolism</keyword>
<keyword id="KW-0560">Oxidoreductase</keyword>
<gene>
    <name type="primary">folA</name>
    <name type="ordered locus">SACOL1461</name>
</gene>
<comment type="function">
    <text evidence="1">Key enzyme in folate metabolism. Catalyzes an essential reaction for de novo glycine and purine synthesis, and for DNA precursor synthesis (By similarity).</text>
</comment>
<comment type="catalytic activity">
    <reaction evidence="2">
        <text>(6S)-5,6,7,8-tetrahydrofolate + NADP(+) = 7,8-dihydrofolate + NADPH + H(+)</text>
        <dbReference type="Rhea" id="RHEA:15009"/>
        <dbReference type="ChEBI" id="CHEBI:15378"/>
        <dbReference type="ChEBI" id="CHEBI:57451"/>
        <dbReference type="ChEBI" id="CHEBI:57453"/>
        <dbReference type="ChEBI" id="CHEBI:57783"/>
        <dbReference type="ChEBI" id="CHEBI:58349"/>
        <dbReference type="EC" id="1.5.1.3"/>
    </reaction>
</comment>
<comment type="pathway">
    <text>Cofactor biosynthesis; tetrahydrofolate biosynthesis; 5,6,7,8-tetrahydrofolate from 7,8-dihydrofolate: step 1/1.</text>
</comment>
<comment type="similarity">
    <text evidence="3">Belongs to the dihydrofolate reductase family.</text>
</comment>
<feature type="initiator methionine" description="Removed" evidence="1">
    <location>
        <position position="1"/>
    </location>
</feature>
<feature type="chain" id="PRO_0000186406" description="Dihydrofolate reductase">
    <location>
        <begin position="2"/>
        <end position="159"/>
    </location>
</feature>
<feature type="domain" description="DHFR" evidence="2">
    <location>
        <begin position="2"/>
        <end position="157"/>
    </location>
</feature>
<feature type="binding site" evidence="1">
    <location>
        <begin position="6"/>
        <end position="8"/>
    </location>
    <ligand>
        <name>substrate</name>
    </ligand>
</feature>
<feature type="binding site" evidence="1">
    <location>
        <begin position="7"/>
        <end position="8"/>
    </location>
    <ligand>
        <name>NADP(+)</name>
        <dbReference type="ChEBI" id="CHEBI:58349"/>
    </ligand>
</feature>
<feature type="binding site" evidence="1">
    <location>
        <begin position="15"/>
        <end position="20"/>
    </location>
    <ligand>
        <name>NADP(+)</name>
        <dbReference type="ChEBI" id="CHEBI:58349"/>
    </ligand>
</feature>
<feature type="binding site" evidence="1">
    <location>
        <position position="28"/>
    </location>
    <ligand>
        <name>substrate</name>
    </ligand>
</feature>
<feature type="binding site" evidence="1">
    <location>
        <begin position="44"/>
        <end position="47"/>
    </location>
    <ligand>
        <name>NADP(+)</name>
        <dbReference type="ChEBI" id="CHEBI:58349"/>
    </ligand>
</feature>
<feature type="binding site" evidence="1">
    <location>
        <position position="58"/>
    </location>
    <ligand>
        <name>substrate</name>
    </ligand>
</feature>
<feature type="binding site" evidence="1">
    <location>
        <begin position="63"/>
        <end position="66"/>
    </location>
    <ligand>
        <name>NADP(+)</name>
        <dbReference type="ChEBI" id="CHEBI:58349"/>
    </ligand>
</feature>
<feature type="binding site" evidence="1">
    <location>
        <begin position="93"/>
        <end position="98"/>
    </location>
    <ligand>
        <name>NADP(+)</name>
        <dbReference type="ChEBI" id="CHEBI:58349"/>
    </ligand>
</feature>
<feature type="binding site" evidence="1">
    <location>
        <position position="112"/>
    </location>
    <ligand>
        <name>substrate</name>
    </ligand>
</feature>
<reference key="1">
    <citation type="journal article" date="2005" name="J. Bacteriol.">
        <title>Insights on evolution of virulence and resistance from the complete genome analysis of an early methicillin-resistant Staphylococcus aureus strain and a biofilm-producing methicillin-resistant Staphylococcus epidermidis strain.</title>
        <authorList>
            <person name="Gill S.R."/>
            <person name="Fouts D.E."/>
            <person name="Archer G.L."/>
            <person name="Mongodin E.F."/>
            <person name="DeBoy R.T."/>
            <person name="Ravel J."/>
            <person name="Paulsen I.T."/>
            <person name="Kolonay J.F."/>
            <person name="Brinkac L.M."/>
            <person name="Beanan M.J."/>
            <person name="Dodson R.J."/>
            <person name="Daugherty S.C."/>
            <person name="Madupu R."/>
            <person name="Angiuoli S.V."/>
            <person name="Durkin A.S."/>
            <person name="Haft D.H."/>
            <person name="Vamathevan J.J."/>
            <person name="Khouri H."/>
            <person name="Utterback T.R."/>
            <person name="Lee C."/>
            <person name="Dimitrov G."/>
            <person name="Jiang L."/>
            <person name="Qin H."/>
            <person name="Weidman J."/>
            <person name="Tran K."/>
            <person name="Kang K.H."/>
            <person name="Hance I.R."/>
            <person name="Nelson K.E."/>
            <person name="Fraser C.M."/>
        </authorList>
    </citation>
    <scope>NUCLEOTIDE SEQUENCE [LARGE SCALE GENOMIC DNA]</scope>
    <source>
        <strain>COL</strain>
    </source>
</reference>
<protein>
    <recommendedName>
        <fullName>Dihydrofolate reductase</fullName>
        <shortName>DHFR</shortName>
        <ecNumber>1.5.1.3</ecNumber>
    </recommendedName>
</protein>
<name>DYR_STAAC</name>
<evidence type="ECO:0000250" key="1"/>
<evidence type="ECO:0000255" key="2">
    <source>
        <dbReference type="PROSITE-ProRule" id="PRU00660"/>
    </source>
</evidence>
<evidence type="ECO:0000305" key="3"/>
<sequence length="159" mass="18251">MTLSILVAHDLQRVIGFENQLPWHLPNDLKHVKKLSTGHTLVMGRKTFESIGKPLPNRRNVVLTSDTSFNVEGVDVIHSIEDIYQLPGHVFIFGGQTLFEEMIDKVDDMYITVIEGKFRGDTFFPPYTFEDWEVASSVEGKLDEKNTIPHTFLHLIRKK</sequence>
<proteinExistence type="inferred from homology"/>
<accession>Q5HFZ7</accession>
<dbReference type="EC" id="1.5.1.3"/>
<dbReference type="EMBL" id="CP000046">
    <property type="protein sequence ID" value="AAW36662.1"/>
    <property type="molecule type" value="Genomic_DNA"/>
</dbReference>
<dbReference type="RefSeq" id="WP_000175746.1">
    <property type="nucleotide sequence ID" value="NZ_JBGOFO010000003.1"/>
</dbReference>
<dbReference type="BMRB" id="Q5HFZ7"/>
<dbReference type="SMR" id="Q5HFZ7"/>
<dbReference type="KEGG" id="sac:SACOL1461"/>
<dbReference type="HOGENOM" id="CLU_043966_5_1_9"/>
<dbReference type="UniPathway" id="UPA00077">
    <property type="reaction ID" value="UER00158"/>
</dbReference>
<dbReference type="Proteomes" id="UP000000530">
    <property type="component" value="Chromosome"/>
</dbReference>
<dbReference type="GO" id="GO:0005829">
    <property type="term" value="C:cytosol"/>
    <property type="evidence" value="ECO:0007669"/>
    <property type="project" value="TreeGrafter"/>
</dbReference>
<dbReference type="GO" id="GO:0004146">
    <property type="term" value="F:dihydrofolate reductase activity"/>
    <property type="evidence" value="ECO:0007669"/>
    <property type="project" value="UniProtKB-EC"/>
</dbReference>
<dbReference type="GO" id="GO:0050661">
    <property type="term" value="F:NADP binding"/>
    <property type="evidence" value="ECO:0007669"/>
    <property type="project" value="InterPro"/>
</dbReference>
<dbReference type="GO" id="GO:0046452">
    <property type="term" value="P:dihydrofolate metabolic process"/>
    <property type="evidence" value="ECO:0007669"/>
    <property type="project" value="TreeGrafter"/>
</dbReference>
<dbReference type="GO" id="GO:0046655">
    <property type="term" value="P:folic acid metabolic process"/>
    <property type="evidence" value="ECO:0007669"/>
    <property type="project" value="TreeGrafter"/>
</dbReference>
<dbReference type="GO" id="GO:0006730">
    <property type="term" value="P:one-carbon metabolic process"/>
    <property type="evidence" value="ECO:0007669"/>
    <property type="project" value="UniProtKB-KW"/>
</dbReference>
<dbReference type="GO" id="GO:0046654">
    <property type="term" value="P:tetrahydrofolate biosynthetic process"/>
    <property type="evidence" value="ECO:0007669"/>
    <property type="project" value="UniProtKB-UniPathway"/>
</dbReference>
<dbReference type="CDD" id="cd00209">
    <property type="entry name" value="DHFR"/>
    <property type="match status" value="1"/>
</dbReference>
<dbReference type="FunFam" id="3.40.430.10:FF:000001">
    <property type="entry name" value="Dihydrofolate reductase"/>
    <property type="match status" value="1"/>
</dbReference>
<dbReference type="Gene3D" id="3.40.430.10">
    <property type="entry name" value="Dihydrofolate Reductase, subunit A"/>
    <property type="match status" value="1"/>
</dbReference>
<dbReference type="InterPro" id="IPR012259">
    <property type="entry name" value="DHFR"/>
</dbReference>
<dbReference type="InterPro" id="IPR024072">
    <property type="entry name" value="DHFR-like_dom_sf"/>
</dbReference>
<dbReference type="InterPro" id="IPR017925">
    <property type="entry name" value="DHFR_CS"/>
</dbReference>
<dbReference type="InterPro" id="IPR001796">
    <property type="entry name" value="DHFR_dom"/>
</dbReference>
<dbReference type="PANTHER" id="PTHR48069">
    <property type="entry name" value="DIHYDROFOLATE REDUCTASE"/>
    <property type="match status" value="1"/>
</dbReference>
<dbReference type="PANTHER" id="PTHR48069:SF3">
    <property type="entry name" value="DIHYDROFOLATE REDUCTASE"/>
    <property type="match status" value="1"/>
</dbReference>
<dbReference type="Pfam" id="PF00186">
    <property type="entry name" value="DHFR_1"/>
    <property type="match status" value="1"/>
</dbReference>
<dbReference type="PIRSF" id="PIRSF000194">
    <property type="entry name" value="DHFR"/>
    <property type="match status" value="1"/>
</dbReference>
<dbReference type="PRINTS" id="PR00070">
    <property type="entry name" value="DHFR"/>
</dbReference>
<dbReference type="SUPFAM" id="SSF53597">
    <property type="entry name" value="Dihydrofolate reductase-like"/>
    <property type="match status" value="1"/>
</dbReference>
<dbReference type="PROSITE" id="PS00075">
    <property type="entry name" value="DHFR_1"/>
    <property type="match status" value="1"/>
</dbReference>
<dbReference type="PROSITE" id="PS51330">
    <property type="entry name" value="DHFR_2"/>
    <property type="match status" value="1"/>
</dbReference>